<sequence>MKFTIVFAGLLGVFLAPALANYNINVNDDNNNAGSGQQSVSVNNEHNVANVDNNNGWDSWNSIWDYGNGFAATRLFQKKTCIVHKMNKEVMPSIQSLDALVKEKKLQGKGPGGPPPKGLMYSVNPNKVDDLSKFGKNIANMCRGIPTYMAEEMQEASLFFYSGTCYTTSVLWIVDISFCGDTVEN</sequence>
<feature type="signal peptide" evidence="2">
    <location>
        <begin position="1"/>
        <end position="20"/>
    </location>
</feature>
<feature type="chain" id="PRO_0000021332" description="Gastrokine-1">
    <location>
        <begin position="21"/>
        <end position="185"/>
    </location>
</feature>
<feature type="domain" description="BRICHOS" evidence="3">
    <location>
        <begin position="54"/>
        <end position="150"/>
    </location>
</feature>
<feature type="disulfide bond" evidence="1">
    <location>
        <begin position="81"/>
        <end position="142"/>
    </location>
</feature>
<feature type="sequence variant" id="VAR_035923" description="In a breast cancer sample; somatic mutation." evidence="7">
    <original>K</original>
    <variation>T</variation>
    <location>
        <position position="104"/>
    </location>
</feature>
<proteinExistence type="evidence at protein level"/>
<gene>
    <name type="primary">GKN1</name>
    <name type="synonym">AMP18</name>
    <name type="synonym">CA11</name>
    <name type="ORF">UNQ489/PRO1005</name>
</gene>
<dbReference type="EMBL" id="AB039886">
    <property type="protein sequence ID" value="BAA92433.1"/>
    <property type="status" value="ALT_INIT"/>
    <property type="molecule type" value="mRNA"/>
</dbReference>
<dbReference type="EMBL" id="AY139182">
    <property type="protein sequence ID" value="AAN75447.1"/>
    <property type="molecule type" value="Genomic_DNA"/>
</dbReference>
<dbReference type="EMBL" id="AY139184">
    <property type="protein sequence ID" value="AAN75449.1"/>
    <property type="molecule type" value="mRNA"/>
</dbReference>
<dbReference type="EMBL" id="AC114802">
    <property type="status" value="NOT_ANNOTATED_CDS"/>
    <property type="molecule type" value="Genomic_DNA"/>
</dbReference>
<dbReference type="EMBL" id="BC059778">
    <property type="protein sequence ID" value="AAH59778.2"/>
    <property type="status" value="ALT_INIT"/>
    <property type="molecule type" value="mRNA"/>
</dbReference>
<dbReference type="EMBL" id="AY359050">
    <property type="protein sequence ID" value="AAQ89409.1"/>
    <property type="molecule type" value="mRNA"/>
</dbReference>
<dbReference type="CCDS" id="CCDS1891.3"/>
<dbReference type="RefSeq" id="NP_062563.3">
    <property type="nucleotide sequence ID" value="NM_019617.3"/>
</dbReference>
<dbReference type="BioGRID" id="121133">
    <property type="interactions" value="30"/>
</dbReference>
<dbReference type="FunCoup" id="Q9NS71">
    <property type="interactions" value="20"/>
</dbReference>
<dbReference type="IntAct" id="Q9NS71">
    <property type="interactions" value="31"/>
</dbReference>
<dbReference type="STRING" id="9606.ENSP00000501093"/>
<dbReference type="TCDB" id="1.C.81.1.10">
    <property type="family name" value="the arenicin (arenicin) family"/>
</dbReference>
<dbReference type="iPTMnet" id="Q9NS71"/>
<dbReference type="PhosphoSitePlus" id="Q9NS71"/>
<dbReference type="BioMuta" id="GKN1"/>
<dbReference type="DMDM" id="223590223"/>
<dbReference type="jPOST" id="Q9NS71"/>
<dbReference type="MassIVE" id="Q9NS71"/>
<dbReference type="PaxDb" id="9606-ENSP00000367172"/>
<dbReference type="PeptideAtlas" id="Q9NS71"/>
<dbReference type="ProteomicsDB" id="82501"/>
<dbReference type="Antibodypedia" id="30965">
    <property type="antibodies" value="333 antibodies from 27 providers"/>
</dbReference>
<dbReference type="DNASU" id="56287"/>
<dbReference type="Ensembl" id="ENST00000377938.4">
    <property type="protein sequence ID" value="ENSP00000367172.3"/>
    <property type="gene ID" value="ENSG00000169605.7"/>
</dbReference>
<dbReference type="GeneID" id="56287"/>
<dbReference type="KEGG" id="hsa:56287"/>
<dbReference type="MANE-Select" id="ENST00000377938.4">
    <property type="protein sequence ID" value="ENSP00000367172.3"/>
    <property type="RefSeq nucleotide sequence ID" value="NM_019617.4"/>
    <property type="RefSeq protein sequence ID" value="NP_062563.4"/>
</dbReference>
<dbReference type="UCSC" id="uc002sfc.4">
    <property type="organism name" value="human"/>
</dbReference>
<dbReference type="AGR" id="HGNC:23217"/>
<dbReference type="CTD" id="56287"/>
<dbReference type="DisGeNET" id="56287"/>
<dbReference type="GeneCards" id="GKN1"/>
<dbReference type="HGNC" id="HGNC:23217">
    <property type="gene designation" value="GKN1"/>
</dbReference>
<dbReference type="HPA" id="ENSG00000169605">
    <property type="expression patterns" value="Tissue enriched (stomach)"/>
</dbReference>
<dbReference type="MIM" id="606402">
    <property type="type" value="gene"/>
</dbReference>
<dbReference type="neXtProt" id="NX_Q9NS71"/>
<dbReference type="OpenTargets" id="ENSG00000169605"/>
<dbReference type="PharmGKB" id="PA134898851"/>
<dbReference type="VEuPathDB" id="HostDB:ENSG00000169605"/>
<dbReference type="eggNOG" id="ENOG502S4AB">
    <property type="taxonomic scope" value="Eukaryota"/>
</dbReference>
<dbReference type="GeneTree" id="ENSGT00930000150969"/>
<dbReference type="HOGENOM" id="CLU_098684_2_0_1"/>
<dbReference type="InParanoid" id="Q9NS71"/>
<dbReference type="OMA" id="YSEKCFT"/>
<dbReference type="OrthoDB" id="8674753at2759"/>
<dbReference type="PAN-GO" id="Q9NS71">
    <property type="GO annotations" value="2 GO annotations based on evolutionary models"/>
</dbReference>
<dbReference type="PhylomeDB" id="Q9NS71"/>
<dbReference type="TreeFam" id="TF335950"/>
<dbReference type="PathwayCommons" id="Q9NS71"/>
<dbReference type="SignaLink" id="Q9NS71"/>
<dbReference type="SIGNOR" id="Q9NS71"/>
<dbReference type="BioGRID-ORCS" id="56287">
    <property type="hits" value="12 hits in 1147 CRISPR screens"/>
</dbReference>
<dbReference type="ChiTaRS" id="GKN1">
    <property type="organism name" value="human"/>
</dbReference>
<dbReference type="GenomeRNAi" id="56287"/>
<dbReference type="Pharos" id="Q9NS71">
    <property type="development level" value="Tbio"/>
</dbReference>
<dbReference type="PRO" id="PR:Q9NS71"/>
<dbReference type="Proteomes" id="UP000005640">
    <property type="component" value="Chromosome 2"/>
</dbReference>
<dbReference type="RNAct" id="Q9NS71">
    <property type="molecule type" value="protein"/>
</dbReference>
<dbReference type="Bgee" id="ENSG00000169605">
    <property type="expression patterns" value="Expressed in mucosa of stomach and 93 other cell types or tissues"/>
</dbReference>
<dbReference type="ExpressionAtlas" id="Q9NS71">
    <property type="expression patterns" value="baseline and differential"/>
</dbReference>
<dbReference type="GO" id="GO:0005576">
    <property type="term" value="C:extracellular region"/>
    <property type="evidence" value="ECO:0000314"/>
    <property type="project" value="UniProtKB"/>
</dbReference>
<dbReference type="GO" id="GO:0005615">
    <property type="term" value="C:extracellular space"/>
    <property type="evidence" value="ECO:0000318"/>
    <property type="project" value="GO_Central"/>
</dbReference>
<dbReference type="GO" id="GO:0005794">
    <property type="term" value="C:Golgi apparatus"/>
    <property type="evidence" value="ECO:0000304"/>
    <property type="project" value="UniProtKB"/>
</dbReference>
<dbReference type="GO" id="GO:0030141">
    <property type="term" value="C:secretory granule"/>
    <property type="evidence" value="ECO:0007669"/>
    <property type="project" value="Ensembl"/>
</dbReference>
<dbReference type="GO" id="GO:0008083">
    <property type="term" value="F:growth factor activity"/>
    <property type="evidence" value="ECO:0007669"/>
    <property type="project" value="Ensembl"/>
</dbReference>
<dbReference type="GO" id="GO:0007586">
    <property type="term" value="P:digestion"/>
    <property type="evidence" value="ECO:0000303"/>
    <property type="project" value="UniProtKB"/>
</dbReference>
<dbReference type="GO" id="GO:0051781">
    <property type="term" value="P:positive regulation of cell division"/>
    <property type="evidence" value="ECO:0007669"/>
    <property type="project" value="UniProtKB-KW"/>
</dbReference>
<dbReference type="GO" id="GO:0008284">
    <property type="term" value="P:positive regulation of cell population proliferation"/>
    <property type="evidence" value="ECO:0007669"/>
    <property type="project" value="Ensembl"/>
</dbReference>
<dbReference type="GO" id="GO:0042127">
    <property type="term" value="P:regulation of cell population proliferation"/>
    <property type="evidence" value="ECO:0000318"/>
    <property type="project" value="GO_Central"/>
</dbReference>
<dbReference type="FunFam" id="3.30.390.150:FF:000003">
    <property type="entry name" value="Gastrokine 1"/>
    <property type="match status" value="1"/>
</dbReference>
<dbReference type="Gene3D" id="3.30.390.150">
    <property type="match status" value="1"/>
</dbReference>
<dbReference type="InterPro" id="IPR007084">
    <property type="entry name" value="BRICHOS_dom"/>
</dbReference>
<dbReference type="InterPro" id="IPR051772">
    <property type="entry name" value="Gastrokine"/>
</dbReference>
<dbReference type="PANTHER" id="PTHR16483">
    <property type="entry name" value="GASTROKINE 1"/>
    <property type="match status" value="1"/>
</dbReference>
<dbReference type="Pfam" id="PF04089">
    <property type="entry name" value="BRICHOS"/>
    <property type="match status" value="1"/>
</dbReference>
<dbReference type="SMART" id="SM01039">
    <property type="entry name" value="BRICHOS"/>
    <property type="match status" value="1"/>
</dbReference>
<dbReference type="PROSITE" id="PS50869">
    <property type="entry name" value="BRICHOS"/>
    <property type="match status" value="1"/>
</dbReference>
<keyword id="KW-1015">Disulfide bond</keyword>
<keyword id="KW-0333">Golgi apparatus</keyword>
<keyword id="KW-0497">Mitogen</keyword>
<keyword id="KW-1267">Proteomics identification</keyword>
<keyword id="KW-1185">Reference proteome</keyword>
<keyword id="KW-0964">Secreted</keyword>
<keyword id="KW-0732">Signal</keyword>
<name>GKN1_HUMAN</name>
<protein>
    <recommendedName>
        <fullName>Gastrokine-1</fullName>
    </recommendedName>
    <alternativeName>
        <fullName>18 kDa antrum mucosa protein</fullName>
        <shortName>AMP-18</shortName>
    </alternativeName>
    <alternativeName>
        <fullName>Protein CA11</fullName>
    </alternativeName>
</protein>
<comment type="function">
    <text evidence="5">Has mitogenic activity and may be involved in maintaining the integrity of the gastric mucosal epithelium.</text>
</comment>
<comment type="interaction">
    <interactant intactId="EBI-3933251">
        <id>Q9NS71</id>
    </interactant>
    <interactant intactId="EBI-13059134">
        <id>Q13520</id>
        <label>AQP6</label>
    </interactant>
    <organismsDiffer>false</organismsDiffer>
    <experiments>3</experiments>
</comment>
<comment type="interaction">
    <interactant intactId="EBI-3933251">
        <id>Q9NS71</id>
    </interactant>
    <interactant intactId="EBI-18304435">
        <id>Q5JX71</id>
        <label>FAM209A</label>
    </interactant>
    <organismsDiffer>false</organismsDiffer>
    <experiments>3</experiments>
</comment>
<comment type="interaction">
    <interactant intactId="EBI-3933251">
        <id>Q9NS71</id>
    </interactant>
    <interactant intactId="EBI-1955541">
        <id>Q53GS7</id>
        <label>GLE1</label>
    </interactant>
    <organismsDiffer>false</organismsDiffer>
    <experiments>3</experiments>
</comment>
<comment type="interaction">
    <interactant intactId="EBI-3933251">
        <id>Q9NS71</id>
    </interactant>
    <interactant intactId="EBI-948266">
        <id>O14901</id>
        <label>KLF11</label>
    </interactant>
    <organismsDiffer>false</organismsDiffer>
    <experiments>3</experiments>
</comment>
<comment type="interaction">
    <interactant intactId="EBI-3933251">
        <id>Q9NS71</id>
    </interactant>
    <interactant intactId="EBI-11956541">
        <id>Q9GZY8-5</id>
        <label>MFF</label>
    </interactant>
    <organismsDiffer>false</organismsDiffer>
    <experiments>3</experiments>
</comment>
<comment type="interaction">
    <interactant intactId="EBI-3933251">
        <id>Q9NS71</id>
    </interactant>
    <interactant intactId="EBI-2811583">
        <id>Q9BVL2</id>
        <label>NUP58</label>
    </interactant>
    <organismsDiffer>false</organismsDiffer>
    <experiments>3</experiments>
</comment>
<comment type="interaction">
    <interactant intactId="EBI-3933251">
        <id>Q9NS71</id>
    </interactant>
    <interactant intactId="EBI-11721828">
        <id>Q8IY26</id>
        <label>PLPP6</label>
    </interactant>
    <organismsDiffer>false</organismsDiffer>
    <experiments>3</experiments>
</comment>
<comment type="interaction">
    <interactant intactId="EBI-3933251">
        <id>Q9NS71</id>
    </interactant>
    <interactant intactId="EBI-10329948">
        <id>Q9Y6X1</id>
        <label>SERP1</label>
    </interactant>
    <organismsDiffer>false</organismsDiffer>
    <experiments>3</experiments>
</comment>
<comment type="interaction">
    <interactant intactId="EBI-3933251">
        <id>Q9NS71</id>
    </interactant>
    <interactant intactId="EBI-749270">
        <id>Q8N6R1</id>
        <label>SERP2</label>
    </interactant>
    <organismsDiffer>false</organismsDiffer>
    <experiments>3</experiments>
</comment>
<comment type="interaction">
    <interactant intactId="EBI-3933251">
        <id>Q9NS71</id>
    </interactant>
    <interactant intactId="EBI-8640191">
        <id>Q9NRQ5</id>
        <label>SMCO4</label>
    </interactant>
    <organismsDiffer>false</organismsDiffer>
    <experiments>3</experiments>
</comment>
<comment type="interaction">
    <interactant intactId="EBI-3933251">
        <id>Q9NS71</id>
    </interactant>
    <interactant intactId="EBI-5235340">
        <id>Q7Z699</id>
        <label>SPRED1</label>
    </interactant>
    <organismsDiffer>false</organismsDiffer>
    <experiments>3</experiments>
</comment>
<comment type="interaction">
    <interactant intactId="EBI-3933251">
        <id>Q9NS71</id>
    </interactant>
    <interactant intactId="EBI-11724423">
        <id>Q7Z7N9</id>
        <label>TMEM179B</label>
    </interactant>
    <organismsDiffer>false</organismsDiffer>
    <experiments>3</experiments>
</comment>
<comment type="interaction">
    <interactant intactId="EBI-3933251">
        <id>Q9NS71</id>
    </interactant>
    <interactant intactId="EBI-16746122">
        <id>Q9NSU2-1</id>
        <label>TREX1</label>
    </interactant>
    <organismsDiffer>false</organismsDiffer>
    <experiments>3</experiments>
</comment>
<comment type="interaction">
    <interactant intactId="EBI-3933251">
        <id>Q9NS71</id>
    </interactant>
    <interactant intactId="EBI-988826">
        <id>Q9Y385</id>
        <label>UBE2J1</label>
    </interactant>
    <organismsDiffer>false</organismsDiffer>
    <experiments>3</experiments>
</comment>
<comment type="interaction">
    <interactant intactId="EBI-3933251">
        <id>Q9NS71</id>
    </interactant>
    <interactant intactId="EBI-1059156">
        <id>Q9P0L0</id>
        <label>VAPA</label>
    </interactant>
    <organismsDiffer>false</organismsDiffer>
    <experiments>3</experiments>
</comment>
<comment type="subcellular location">
    <subcellularLocation>
        <location evidence="6">Secreted</location>
    </subcellularLocation>
    <subcellularLocation>
        <location evidence="6">Cytoplasmic granule</location>
    </subcellularLocation>
    <subcellularLocation>
        <location evidence="9">Golgi apparatus</location>
    </subcellularLocation>
    <text evidence="6">Shows abundant granular cytoplasmic staining, with perinuclear accentuation suggestive of the Golgi apparatus.</text>
</comment>
<comment type="tissue specificity">
    <text evidence="4 5 6">Expressed in stomach (at protein level). No expression is detected in cancer tissue or gastric cancer cell lines.</text>
</comment>
<comment type="similarity">
    <text evidence="8">Belongs to the gastrokine family.</text>
</comment>
<comment type="sequence caution" evidence="8">
    <conflict type="erroneous initiation">
        <sequence resource="EMBL-CDS" id="AAH59778"/>
    </conflict>
    <text>Extended N-terminus.</text>
</comment>
<comment type="sequence caution" evidence="8">
    <conflict type="erroneous initiation">
        <sequence resource="EMBL-CDS" id="BAA92433"/>
    </conflict>
    <text>Extended N-terminus.</text>
</comment>
<organism>
    <name type="scientific">Homo sapiens</name>
    <name type="common">Human</name>
    <dbReference type="NCBI Taxonomy" id="9606"/>
    <lineage>
        <taxon>Eukaryota</taxon>
        <taxon>Metazoa</taxon>
        <taxon>Chordata</taxon>
        <taxon>Craniata</taxon>
        <taxon>Vertebrata</taxon>
        <taxon>Euteleostomi</taxon>
        <taxon>Mammalia</taxon>
        <taxon>Eutheria</taxon>
        <taxon>Euarchontoglires</taxon>
        <taxon>Primates</taxon>
        <taxon>Haplorrhini</taxon>
        <taxon>Catarrhini</taxon>
        <taxon>Hominidae</taxon>
        <taxon>Homo</taxon>
    </lineage>
</organism>
<accession>Q9NS71</accession>
<accession>Q8IUA9</accession>
<reference key="1">
    <citation type="journal article" date="2000" name="Jpn. J. Cancer Res.">
        <title>Isolation of two novel genes, down-regulated in gastric cancer.</title>
        <authorList>
            <person name="Yoshikawa Y."/>
            <person name="Mukai H."/>
            <person name="Hino F."/>
            <person name="Asada K."/>
            <person name="Kato I."/>
        </authorList>
    </citation>
    <scope>NUCLEOTIDE SEQUENCE [MRNA]</scope>
    <scope>TISSUE SPECIFICITY</scope>
    <source>
        <tissue>Stomach</tissue>
    </source>
</reference>
<reference key="2">
    <citation type="journal article" date="2003" name="Am. J. Physiol.">
        <title>A novel mitogenic protein that is highly expressed in cells of the gastric antrum mucosa.</title>
        <authorList>
            <person name="Martin T.E."/>
            <person name="Powell C.T."/>
            <person name="Wang Z."/>
            <person name="Bhattacharyya S."/>
            <person name="Walsh-Reitz M.M."/>
            <person name="Agarwal K."/>
            <person name="Toback F.G."/>
        </authorList>
    </citation>
    <scope>NUCLEOTIDE SEQUENCE [GENOMIC DNA / MRNA]</scope>
    <scope>FUNCTION</scope>
    <scope>TISSUE SPECIFICITY</scope>
    <source>
        <tissue>Stomach</tissue>
    </source>
</reference>
<reference key="3">
    <citation type="journal article" date="2005" name="Nature">
        <title>Generation and annotation of the DNA sequences of human chromosomes 2 and 4.</title>
        <authorList>
            <person name="Hillier L.W."/>
            <person name="Graves T.A."/>
            <person name="Fulton R.S."/>
            <person name="Fulton L.A."/>
            <person name="Pepin K.H."/>
            <person name="Minx P."/>
            <person name="Wagner-McPherson C."/>
            <person name="Layman D."/>
            <person name="Wylie K."/>
            <person name="Sekhon M."/>
            <person name="Becker M.C."/>
            <person name="Fewell G.A."/>
            <person name="Delehaunty K.D."/>
            <person name="Miner T.L."/>
            <person name="Nash W.E."/>
            <person name="Kremitzki C."/>
            <person name="Oddy L."/>
            <person name="Du H."/>
            <person name="Sun H."/>
            <person name="Bradshaw-Cordum H."/>
            <person name="Ali J."/>
            <person name="Carter J."/>
            <person name="Cordes M."/>
            <person name="Harris A."/>
            <person name="Isak A."/>
            <person name="van Brunt A."/>
            <person name="Nguyen C."/>
            <person name="Du F."/>
            <person name="Courtney L."/>
            <person name="Kalicki J."/>
            <person name="Ozersky P."/>
            <person name="Abbott S."/>
            <person name="Armstrong J."/>
            <person name="Belter E.A."/>
            <person name="Caruso L."/>
            <person name="Cedroni M."/>
            <person name="Cotton M."/>
            <person name="Davidson T."/>
            <person name="Desai A."/>
            <person name="Elliott G."/>
            <person name="Erb T."/>
            <person name="Fronick C."/>
            <person name="Gaige T."/>
            <person name="Haakenson W."/>
            <person name="Haglund K."/>
            <person name="Holmes A."/>
            <person name="Harkins R."/>
            <person name="Kim K."/>
            <person name="Kruchowski S.S."/>
            <person name="Strong C.M."/>
            <person name="Grewal N."/>
            <person name="Goyea E."/>
            <person name="Hou S."/>
            <person name="Levy A."/>
            <person name="Martinka S."/>
            <person name="Mead K."/>
            <person name="McLellan M.D."/>
            <person name="Meyer R."/>
            <person name="Randall-Maher J."/>
            <person name="Tomlinson C."/>
            <person name="Dauphin-Kohlberg S."/>
            <person name="Kozlowicz-Reilly A."/>
            <person name="Shah N."/>
            <person name="Swearengen-Shahid S."/>
            <person name="Snider J."/>
            <person name="Strong J.T."/>
            <person name="Thompson J."/>
            <person name="Yoakum M."/>
            <person name="Leonard S."/>
            <person name="Pearman C."/>
            <person name="Trani L."/>
            <person name="Radionenko M."/>
            <person name="Waligorski J.E."/>
            <person name="Wang C."/>
            <person name="Rock S.M."/>
            <person name="Tin-Wollam A.-M."/>
            <person name="Maupin R."/>
            <person name="Latreille P."/>
            <person name="Wendl M.C."/>
            <person name="Yang S.-P."/>
            <person name="Pohl C."/>
            <person name="Wallis J.W."/>
            <person name="Spieth J."/>
            <person name="Bieri T.A."/>
            <person name="Berkowicz N."/>
            <person name="Nelson J.O."/>
            <person name="Osborne J."/>
            <person name="Ding L."/>
            <person name="Meyer R."/>
            <person name="Sabo A."/>
            <person name="Shotland Y."/>
            <person name="Sinha P."/>
            <person name="Wohldmann P.E."/>
            <person name="Cook L.L."/>
            <person name="Hickenbotham M.T."/>
            <person name="Eldred J."/>
            <person name="Williams D."/>
            <person name="Jones T.A."/>
            <person name="She X."/>
            <person name="Ciccarelli F.D."/>
            <person name="Izaurralde E."/>
            <person name="Taylor J."/>
            <person name="Schmutz J."/>
            <person name="Myers R.M."/>
            <person name="Cox D.R."/>
            <person name="Huang X."/>
            <person name="McPherson J.D."/>
            <person name="Mardis E.R."/>
            <person name="Clifton S.W."/>
            <person name="Warren W.C."/>
            <person name="Chinwalla A.T."/>
            <person name="Eddy S.R."/>
            <person name="Marra M.A."/>
            <person name="Ovcharenko I."/>
            <person name="Furey T.S."/>
            <person name="Miller W."/>
            <person name="Eichler E.E."/>
            <person name="Bork P."/>
            <person name="Suyama M."/>
            <person name="Torrents D."/>
            <person name="Waterston R.H."/>
            <person name="Wilson R.K."/>
        </authorList>
    </citation>
    <scope>NUCLEOTIDE SEQUENCE [LARGE SCALE GENOMIC DNA]</scope>
</reference>
<reference key="4">
    <citation type="journal article" date="2004" name="Genome Res.">
        <title>The status, quality, and expansion of the NIH full-length cDNA project: the Mammalian Gene Collection (MGC).</title>
        <authorList>
            <consortium name="The MGC Project Team"/>
        </authorList>
    </citation>
    <scope>NUCLEOTIDE SEQUENCE [LARGE SCALE MRNA]</scope>
    <source>
        <tissue>Colon</tissue>
    </source>
</reference>
<reference key="5">
    <citation type="journal article" date="2003" name="Genome Res.">
        <title>The secreted protein discovery initiative (SPDI), a large-scale effort to identify novel human secreted and transmembrane proteins: a bioinformatics assessment.</title>
        <authorList>
            <person name="Clark H.F."/>
            <person name="Gurney A.L."/>
            <person name="Abaya E."/>
            <person name="Baker K."/>
            <person name="Baldwin D.T."/>
            <person name="Brush J."/>
            <person name="Chen J."/>
            <person name="Chow B."/>
            <person name="Chui C."/>
            <person name="Crowley C."/>
            <person name="Currell B."/>
            <person name="Deuel B."/>
            <person name="Dowd P."/>
            <person name="Eaton D."/>
            <person name="Foster J.S."/>
            <person name="Grimaldi C."/>
            <person name="Gu Q."/>
            <person name="Hass P.E."/>
            <person name="Heldens S."/>
            <person name="Huang A."/>
            <person name="Kim H.S."/>
            <person name="Klimowski L."/>
            <person name="Jin Y."/>
            <person name="Johnson S."/>
            <person name="Lee J."/>
            <person name="Lewis L."/>
            <person name="Liao D."/>
            <person name="Mark M.R."/>
            <person name="Robbie E."/>
            <person name="Sanchez C."/>
            <person name="Schoenfeld J."/>
            <person name="Seshagiri S."/>
            <person name="Simmons L."/>
            <person name="Singh J."/>
            <person name="Smith V."/>
            <person name="Stinson J."/>
            <person name="Vagts A."/>
            <person name="Vandlen R.L."/>
            <person name="Watanabe C."/>
            <person name="Wieand D."/>
            <person name="Woods K."/>
            <person name="Xie M.-H."/>
            <person name="Yansura D.G."/>
            <person name="Yi S."/>
            <person name="Yu G."/>
            <person name="Yuan J."/>
            <person name="Zhang M."/>
            <person name="Zhang Z."/>
            <person name="Goddard A.D."/>
            <person name="Wood W.I."/>
            <person name="Godowski P.J."/>
            <person name="Gray A.M."/>
        </authorList>
    </citation>
    <scope>NUCLEOTIDE SEQUENCE [LARGE SCALE MRNA]</scope>
</reference>
<reference key="6">
    <citation type="journal article" date="2004" name="J. Pathol.">
        <title>Gastrokine 1 is abundantly and specifically expressed in superficial gastric epithelium, down-regulated in gastric carcinoma, and shows high evolutionary conservation.</title>
        <authorList>
            <person name="Oien K.A."/>
            <person name="McGregor F."/>
            <person name="Butler S."/>
            <person name="Ferrier R.K."/>
            <person name="Downie I."/>
            <person name="Bryce S."/>
            <person name="Burns S."/>
            <person name="Keith W.N."/>
        </authorList>
    </citation>
    <scope>SUBCELLULAR LOCATION</scope>
    <scope>TISSUE SPECIFICITY</scope>
</reference>
<reference key="7">
    <citation type="journal article" date="2006" name="Science">
        <title>The consensus coding sequences of human breast and colorectal cancers.</title>
        <authorList>
            <person name="Sjoeblom T."/>
            <person name="Jones S."/>
            <person name="Wood L.D."/>
            <person name="Parsons D.W."/>
            <person name="Lin J."/>
            <person name="Barber T.D."/>
            <person name="Mandelker D."/>
            <person name="Leary R.J."/>
            <person name="Ptak J."/>
            <person name="Silliman N."/>
            <person name="Szabo S."/>
            <person name="Buckhaults P."/>
            <person name="Farrell C."/>
            <person name="Meeh P."/>
            <person name="Markowitz S.D."/>
            <person name="Willis J."/>
            <person name="Dawson D."/>
            <person name="Willson J.K.V."/>
            <person name="Gazdar A.F."/>
            <person name="Hartigan J."/>
            <person name="Wu L."/>
            <person name="Liu C."/>
            <person name="Parmigiani G."/>
            <person name="Park B.H."/>
            <person name="Bachman K.E."/>
            <person name="Papadopoulos N."/>
            <person name="Vogelstein B."/>
            <person name="Kinzler K.W."/>
            <person name="Velculescu V.E."/>
        </authorList>
    </citation>
    <scope>VARIANT [LARGE SCALE ANALYSIS] THR-104</scope>
</reference>
<evidence type="ECO:0000250" key="1"/>
<evidence type="ECO:0000255" key="2"/>
<evidence type="ECO:0000255" key="3">
    <source>
        <dbReference type="PROSITE-ProRule" id="PRU00255"/>
    </source>
</evidence>
<evidence type="ECO:0000269" key="4">
    <source>
    </source>
</evidence>
<evidence type="ECO:0000269" key="5">
    <source>
    </source>
</evidence>
<evidence type="ECO:0000269" key="6">
    <source>
    </source>
</evidence>
<evidence type="ECO:0000269" key="7">
    <source>
    </source>
</evidence>
<evidence type="ECO:0000305" key="8"/>
<evidence type="ECO:0000305" key="9">
    <source>
    </source>
</evidence>